<protein>
    <recommendedName>
        <fullName evidence="1">Ferrochelatase</fullName>
        <ecNumber evidence="1">4.98.1.1</ecNumber>
    </recommendedName>
    <alternativeName>
        <fullName evidence="1">Heme synthase</fullName>
    </alternativeName>
    <alternativeName>
        <fullName evidence="1">Protoheme ferro-lyase</fullName>
    </alternativeName>
</protein>
<feature type="chain" id="PRO_1000072023" description="Ferrochelatase">
    <location>
        <begin position="1"/>
        <end position="309"/>
    </location>
</feature>
<feature type="binding site" evidence="1">
    <location>
        <position position="185"/>
    </location>
    <ligand>
        <name>Fe cation</name>
        <dbReference type="ChEBI" id="CHEBI:24875"/>
    </ligand>
</feature>
<feature type="binding site" evidence="1">
    <location>
        <position position="262"/>
    </location>
    <ligand>
        <name>Fe cation</name>
        <dbReference type="ChEBI" id="CHEBI:24875"/>
    </ligand>
</feature>
<accession>A8FKS9</accession>
<organism>
    <name type="scientific">Campylobacter jejuni subsp. jejuni serotype O:6 (strain 81116 / NCTC 11828)</name>
    <dbReference type="NCBI Taxonomy" id="407148"/>
    <lineage>
        <taxon>Bacteria</taxon>
        <taxon>Pseudomonadati</taxon>
        <taxon>Campylobacterota</taxon>
        <taxon>Epsilonproteobacteria</taxon>
        <taxon>Campylobacterales</taxon>
        <taxon>Campylobacteraceae</taxon>
        <taxon>Campylobacter</taxon>
    </lineage>
</organism>
<evidence type="ECO:0000255" key="1">
    <source>
        <dbReference type="HAMAP-Rule" id="MF_00323"/>
    </source>
</evidence>
<dbReference type="EC" id="4.98.1.1" evidence="1"/>
<dbReference type="EMBL" id="CP000814">
    <property type="protein sequence ID" value="ABV52066.1"/>
    <property type="molecule type" value="Genomic_DNA"/>
</dbReference>
<dbReference type="RefSeq" id="WP_012006658.1">
    <property type="nucleotide sequence ID" value="NC_009839.1"/>
</dbReference>
<dbReference type="SMR" id="A8FKS9"/>
<dbReference type="KEGG" id="cju:C8J_0467"/>
<dbReference type="HOGENOM" id="CLU_018884_4_1_7"/>
<dbReference type="UniPathway" id="UPA00252">
    <property type="reaction ID" value="UER00325"/>
</dbReference>
<dbReference type="GO" id="GO:0005737">
    <property type="term" value="C:cytoplasm"/>
    <property type="evidence" value="ECO:0007669"/>
    <property type="project" value="UniProtKB-SubCell"/>
</dbReference>
<dbReference type="GO" id="GO:0004325">
    <property type="term" value="F:ferrochelatase activity"/>
    <property type="evidence" value="ECO:0007669"/>
    <property type="project" value="UniProtKB-UniRule"/>
</dbReference>
<dbReference type="GO" id="GO:0046872">
    <property type="term" value="F:metal ion binding"/>
    <property type="evidence" value="ECO:0007669"/>
    <property type="project" value="UniProtKB-KW"/>
</dbReference>
<dbReference type="GO" id="GO:0006783">
    <property type="term" value="P:heme biosynthetic process"/>
    <property type="evidence" value="ECO:0007669"/>
    <property type="project" value="UniProtKB-UniRule"/>
</dbReference>
<dbReference type="CDD" id="cd00419">
    <property type="entry name" value="Ferrochelatase_C"/>
    <property type="match status" value="1"/>
</dbReference>
<dbReference type="CDD" id="cd03411">
    <property type="entry name" value="Ferrochelatase_N"/>
    <property type="match status" value="1"/>
</dbReference>
<dbReference type="Gene3D" id="3.40.50.1400">
    <property type="match status" value="2"/>
</dbReference>
<dbReference type="HAMAP" id="MF_00323">
    <property type="entry name" value="Ferrochelatase"/>
    <property type="match status" value="1"/>
</dbReference>
<dbReference type="InterPro" id="IPR001015">
    <property type="entry name" value="Ferrochelatase"/>
</dbReference>
<dbReference type="InterPro" id="IPR019772">
    <property type="entry name" value="Ferrochelatase_AS"/>
</dbReference>
<dbReference type="InterPro" id="IPR033644">
    <property type="entry name" value="Ferrochelatase_C"/>
</dbReference>
<dbReference type="InterPro" id="IPR033659">
    <property type="entry name" value="Ferrochelatase_N"/>
</dbReference>
<dbReference type="NCBIfam" id="TIGR00109">
    <property type="entry name" value="hemH"/>
    <property type="match status" value="1"/>
</dbReference>
<dbReference type="PANTHER" id="PTHR11108">
    <property type="entry name" value="FERROCHELATASE"/>
    <property type="match status" value="1"/>
</dbReference>
<dbReference type="PANTHER" id="PTHR11108:SF1">
    <property type="entry name" value="FERROCHELATASE, MITOCHONDRIAL"/>
    <property type="match status" value="1"/>
</dbReference>
<dbReference type="Pfam" id="PF00762">
    <property type="entry name" value="Ferrochelatase"/>
    <property type="match status" value="1"/>
</dbReference>
<dbReference type="SUPFAM" id="SSF53800">
    <property type="entry name" value="Chelatase"/>
    <property type="match status" value="1"/>
</dbReference>
<dbReference type="PROSITE" id="PS00534">
    <property type="entry name" value="FERROCHELATASE"/>
    <property type="match status" value="1"/>
</dbReference>
<name>HEMH_CAMJ8</name>
<proteinExistence type="inferred from homology"/>
<reference key="1">
    <citation type="journal article" date="2007" name="J. Bacteriol.">
        <title>The complete genome sequence of Campylobacter jejuni strain 81116 (NCTC11828).</title>
        <authorList>
            <person name="Pearson B.M."/>
            <person name="Gaskin D.J.H."/>
            <person name="Segers R.P.A.M."/>
            <person name="Wells J.M."/>
            <person name="Nuijten P.J.M."/>
            <person name="van Vliet A.H.M."/>
        </authorList>
    </citation>
    <scope>NUCLEOTIDE SEQUENCE [LARGE SCALE GENOMIC DNA]</scope>
    <source>
        <strain>81116 / NCTC 11828</strain>
    </source>
</reference>
<comment type="function">
    <text evidence="1">Catalyzes the ferrous insertion into protoporphyrin IX.</text>
</comment>
<comment type="catalytic activity">
    <reaction evidence="1">
        <text>heme b + 2 H(+) = protoporphyrin IX + Fe(2+)</text>
        <dbReference type="Rhea" id="RHEA:22584"/>
        <dbReference type="ChEBI" id="CHEBI:15378"/>
        <dbReference type="ChEBI" id="CHEBI:29033"/>
        <dbReference type="ChEBI" id="CHEBI:57306"/>
        <dbReference type="ChEBI" id="CHEBI:60344"/>
        <dbReference type="EC" id="4.98.1.1"/>
    </reaction>
</comment>
<comment type="pathway">
    <text evidence="1">Porphyrin-containing compound metabolism; protoheme biosynthesis; protoheme from protoporphyrin-IX: step 1/1.</text>
</comment>
<comment type="subcellular location">
    <subcellularLocation>
        <location evidence="1">Cytoplasm</location>
    </subcellularLocation>
</comment>
<comment type="similarity">
    <text evidence="1">Belongs to the ferrochelatase family.</text>
</comment>
<sequence length="309" mass="35723">MKLVLFLNMGGATNLQDCEVFLKNMFNDPYILGIKNRFLRKFVAWIITKARVKAMQENYKKMGGKSPLNELTQSLCNKLNLKQDEFKFDFVNLYVPPFATEILQKYTLNESDEIILFPLYPHHSCTTVTSSLEVLQNEISKQKIQAKVKTIDIFYKNELYNEMIVSHILAKKSKFDAKILIFSAHSLPQSIIDKGDLYEKHVNDHVEILKEKLKDHFDEFILAYQSKLGPVKWLEPNTSDVLANLNDKALIYPISFCIDCSETIFELGMEYKHLAKCDYDLISCPNDSDEFMEFILNSINSPLARKTSC</sequence>
<gene>
    <name evidence="1" type="primary">hemH</name>
    <name type="ordered locus">C8J_0467</name>
</gene>
<keyword id="KW-0963">Cytoplasm</keyword>
<keyword id="KW-0350">Heme biosynthesis</keyword>
<keyword id="KW-0408">Iron</keyword>
<keyword id="KW-0456">Lyase</keyword>
<keyword id="KW-0479">Metal-binding</keyword>
<keyword id="KW-0627">Porphyrin biosynthesis</keyword>